<dbReference type="EMBL" id="DQ400808">
    <property type="protein sequence ID" value="ABG33864.1"/>
    <property type="molecule type" value="Genomic_DNA"/>
</dbReference>
<dbReference type="PDB" id="4IGL">
    <property type="method" value="X-ray"/>
    <property type="resolution" value="2.49 A"/>
    <property type="chains" value="B/D=1-690"/>
</dbReference>
<dbReference type="PDBsum" id="4IGL"/>
<dbReference type="SMR" id="B6A882"/>
<dbReference type="DIP" id="DIP-60598N"/>
<dbReference type="IntAct" id="B6A882">
    <property type="interactions" value="1"/>
</dbReference>
<dbReference type="STRING" id="935293.PL78_03770"/>
<dbReference type="KEGG" id="yeg:PL78_03770"/>
<dbReference type="PATRIC" id="fig|935293.3.peg.811"/>
<dbReference type="OrthoDB" id="8596416at2"/>
<dbReference type="EvolutionaryTrace" id="B6A882"/>
<dbReference type="GO" id="GO:0005576">
    <property type="term" value="C:extracellular region"/>
    <property type="evidence" value="ECO:0007669"/>
    <property type="project" value="UniProtKB-SubCell"/>
</dbReference>
<dbReference type="Gene3D" id="2.180.10.10">
    <property type="entry name" value="RHS repeat-associated core"/>
    <property type="match status" value="1"/>
</dbReference>
<dbReference type="InterPro" id="IPR022385">
    <property type="entry name" value="Rhs_assc_core"/>
</dbReference>
<dbReference type="InterPro" id="IPR050708">
    <property type="entry name" value="T6SS_VgrG/RHS"/>
</dbReference>
<dbReference type="InterPro" id="IPR041508">
    <property type="entry name" value="TcC-like_repeat"/>
</dbReference>
<dbReference type="InterPro" id="IPR025968">
    <property type="entry name" value="YwqJ_deaminase"/>
</dbReference>
<dbReference type="NCBIfam" id="TIGR03696">
    <property type="entry name" value="Rhs_assc_core"/>
    <property type="match status" value="1"/>
</dbReference>
<dbReference type="PANTHER" id="PTHR32305">
    <property type="match status" value="1"/>
</dbReference>
<dbReference type="PANTHER" id="PTHR32305:SF15">
    <property type="entry name" value="PROTEIN RHSA-RELATED"/>
    <property type="match status" value="1"/>
</dbReference>
<dbReference type="Pfam" id="PF18807">
    <property type="entry name" value="TTc_toxin_rep"/>
    <property type="match status" value="1"/>
</dbReference>
<dbReference type="Pfam" id="PF14431">
    <property type="entry name" value="YwqJ-deaminase"/>
    <property type="match status" value="1"/>
</dbReference>
<comment type="function">
    <text evidence="1 6">Part of an orally active toxin complex (TC) with strong insecticidal effects on larvae of the Coleoptera Costelytra zealandica, Acrossidius tasmania and Adoryphorus couloni and some Lepidoptera larvae (PubMed:21278295). The TC has an endochitinase activity (Probable) (PubMed:21278295).</text>
</comment>
<comment type="activity regulation">
    <text evidence="1">Toxin complex is secreted when grown at 25 degrees Celsius or less; at higher temperatures the proteins are present intracellularly but not secreted.</text>
</comment>
<comment type="subunit">
    <text evidence="1 2 3">Semipurified toxin complex consists of at least YenA1-YenA2-YenB-YenC1-YenC2-Chi1-Chi2 (PubMed:21278295). YenB and the N-terminus of YenC2 form a large hollow shell of beta-strands (PubMed:23913273). The shell is closed at both ends, within which the C-terminus of YenC2 is probably found (PubMed:23913273). The C-terminal region dissociates from the YenB-YenC2 complex at pH 4.5 but not 7.5 (PubMed:23913273). The Yen-TC:K9 subcomplex is about 26 nm tall and 22 nm in diameter with 5-fold symmetry and 5 copies of YenA1, YenA2, Chi1 and Chi2; the chitinase subunits may be solvent accessible on the exterior the complex (PubMed:22158901). The Yen-TC:K9 subcomplex has no insecticidal activity (PubMed:22158901). The native complex with additional YenB, YenC1 and YenC2 subunits is 16 nm taller and is insecticidal; the toxicity-conferring subunits are present at about 1 copy each (PubMed:22158901).</text>
</comment>
<comment type="interaction">
    <interactant intactId="EBI-16067263">
        <id>B6A882</id>
    </interactant>
    <interactant intactId="EBI-16067250">
        <id>B6A880</id>
        <label>yenB</label>
    </interactant>
    <organismsDiffer>false</organismsDiffer>
    <experiments>3</experiments>
</comment>
<comment type="subcellular location">
    <subcellularLocation>
        <location evidence="1">Secreted</location>
    </subcellularLocation>
    <text evidence="1">Secreted when grown at 25 degrees Celsius or less, but not when grown at 30 or 37 degrees Celsius.</text>
</comment>
<comment type="domain">
    <text evidence="3">Residues 610-690 form a beta-strand plug which closes one end of the shell; the other end of the shell is closed by the 5-bladed beta-propeller domain in YenB.</text>
</comment>
<comment type="disruption phenotype">
    <text evidence="1">A double yenC1-yenC2 deletion is no longer pathogenic in C.zealandica larvae.</text>
</comment>
<comment type="similarity">
    <text evidence="7">Belongs to the RHS family.</text>
</comment>
<keyword id="KW-0002">3D-structure</keyword>
<keyword id="KW-0068">Autocatalytic cleavage</keyword>
<keyword id="KW-0677">Repeat</keyword>
<keyword id="KW-0964">Secreted</keyword>
<keyword id="KW-0843">Virulence</keyword>
<gene>
    <name evidence="4" type="primary">yenC2</name>
</gene>
<accession>B6A882</accession>
<proteinExistence type="evidence at protein level"/>
<sequence length="970" mass="107447">MDIQLFSKTPSVTVFDNRGLSVRDIAYRRHPDTPKVTEECITYHQFDFRGFLAQSLDPRLNHKEVTNFSYLTDLNGNIIYTQSVDAGNTLVLNDTEGRSVIAMTNISRGENGKDDLSLAVTRTFQYENAPLPGRPLSVTEQVNGENARITEHFVYAGNTPQEKNLNLAGQCVSYYDAAGLIQTDSVSLTGKPLSVSRKLLKNLDDTNILADWQGNDTSAWNSLLATEIYTTVTRTDAAGAVLTTIDAVGNQQRVAFDIAGQLSASWLTLKGGQEQVIIKVLTYSAAGQKLREEGGNGVVTTYTYEAETQRLIGIKTERPNGHAAGAKVLQDLRYEYDPVGNVLSITNDAEETRFWRNQKVVPENAYRYDSLYQLVSASGREVAGAGQQGSDLPSPLVPLPSDSSVYTNYTRTYTYDSAGNLMRIRHSAPATNNNYTLNITVSERSNRGVMSSLTENPADVDALFTASGSQKCLQQGQSLIWTPRGELRTVLLVARGETADDSESYRYDGSSQRILKISSQQTNHSARVQRALYLPGLEWRTMTGGVAEAENLQVICIGEAGRAQVRVLHWESGKPDGIINDQIRWSYDNLTCSSGLEVDGDGLVISMEEYYPYGGTAVWAARSHIETAYKTVRYSGKERDATGLYYYGFRYYQPWAGRWLSADPAGTVDGLNLYRMVRNNPLRLTDPDGMAPLDWLDLDTTNASRDIVKAIYQLNQIDGPHRGVRDTYQRMTESTGMILQETLNNEAVLKGIKQKDKEKKSRGMKFTNSKLKTYAAHAGVLNTLQPDPVYKDGFLNLPGSLGNKNTFPGVELIEDKVKPSLSQYHPDKLGKSQRWKPESSLGYYRVADTEAFITGIRSQYKSSGTDLHAVVEGRIRDHLLANNNVLPKMAGIAGLHAEVQALNYIISNPDIEGGNAERLNGSYIFTQRLVGDVNQDFPACYNCSGIISGLENVMTGRVNNDVRLKRRKSF</sequence>
<feature type="chain" id="PRO_0000445775" description="Toxin subunit YenC2">
    <location>
        <begin position="1"/>
        <end position="970"/>
    </location>
</feature>
<feature type="repeat" description="RHS 1" evidence="7">
    <location>
        <begin position="168"/>
        <end position="182"/>
    </location>
</feature>
<feature type="repeat" description="RHS 2" evidence="7">
    <location>
        <begin position="297"/>
        <end position="311"/>
    </location>
</feature>
<feature type="repeat" description="RHS 3" evidence="7">
    <location>
        <begin position="329"/>
        <end position="343"/>
    </location>
</feature>
<feature type="repeat" description="RHS 4" evidence="7">
    <location>
        <begin position="361"/>
        <end position="375"/>
    </location>
</feature>
<feature type="repeat" description="RHS 5" evidence="7">
    <location>
        <begin position="408"/>
        <end position="422"/>
    </location>
</feature>
<feature type="repeat" description="RHS 6" evidence="7">
    <location>
        <begin position="500"/>
        <end position="514"/>
    </location>
</feature>
<feature type="repeat" description="RHS 7" evidence="7">
    <location>
        <begin position="580"/>
        <end position="594"/>
    </location>
</feature>
<feature type="repeat" description="RHS 8" evidence="7">
    <location>
        <begin position="606"/>
        <end position="620"/>
    </location>
</feature>
<feature type="repeat" description="RHS 9" evidence="7">
    <location>
        <begin position="640"/>
        <end position="654"/>
    </location>
</feature>
<feature type="region of interest" description="RHS-repeat associated core domain" evidence="5">
    <location>
        <begin position="610"/>
        <end position="690"/>
    </location>
</feature>
<feature type="region of interest" description="Deaminase domain" evidence="5">
    <location>
        <begin position="849"/>
        <end position="950"/>
    </location>
</feature>
<feature type="site" description="Cleavage; by autolysis" evidence="7">
    <location>
        <begin position="690"/>
        <end position="691"/>
    </location>
</feature>
<feature type="mutagenesis site" description="Loss of auto-proteolytic activity." evidence="3">
    <original>R</original>
    <variation>A</variation>
    <location>
        <position position="650"/>
    </location>
</feature>
<feature type="mutagenesis site" description="Loss of auto-proteolytic activity." evidence="3">
    <original>D</original>
    <variation>N</variation>
    <location>
        <position position="663"/>
    </location>
</feature>
<feature type="mutagenesis site" description="Loss of auto-proteolytic activity." evidence="3">
    <original>D</original>
    <variation>N</variation>
    <location>
        <position position="686"/>
    </location>
</feature>
<feature type="turn" evidence="9">
    <location>
        <begin position="5"/>
        <end position="8"/>
    </location>
</feature>
<feature type="strand" evidence="9">
    <location>
        <begin position="11"/>
        <end position="15"/>
    </location>
</feature>
<feature type="strand" evidence="9">
    <location>
        <begin position="21"/>
        <end position="28"/>
    </location>
</feature>
<feature type="strand" evidence="9">
    <location>
        <begin position="38"/>
        <end position="46"/>
    </location>
</feature>
<feature type="strand" evidence="9">
    <location>
        <begin position="52"/>
        <end position="56"/>
    </location>
</feature>
<feature type="helix" evidence="9">
    <location>
        <begin position="58"/>
        <end position="61"/>
    </location>
</feature>
<feature type="turn" evidence="9">
    <location>
        <begin position="62"/>
        <end position="64"/>
    </location>
</feature>
<feature type="strand" evidence="9">
    <location>
        <begin position="67"/>
        <end position="72"/>
    </location>
</feature>
<feature type="strand" evidence="9">
    <location>
        <begin position="78"/>
        <end position="83"/>
    </location>
</feature>
<feature type="turn" evidence="9">
    <location>
        <begin position="84"/>
        <end position="86"/>
    </location>
</feature>
<feature type="strand" evidence="9">
    <location>
        <begin position="87"/>
        <end position="93"/>
    </location>
</feature>
<feature type="strand" evidence="9">
    <location>
        <begin position="99"/>
        <end position="107"/>
    </location>
</feature>
<feature type="strand" evidence="9">
    <location>
        <begin position="120"/>
        <end position="126"/>
    </location>
</feature>
<feature type="strand" evidence="9">
    <location>
        <begin position="135"/>
        <end position="142"/>
    </location>
</feature>
<feature type="strand" evidence="9">
    <location>
        <begin position="148"/>
        <end position="156"/>
    </location>
</feature>
<feature type="helix" evidence="9">
    <location>
        <begin position="160"/>
        <end position="164"/>
    </location>
</feature>
<feature type="strand" evidence="9">
    <location>
        <begin position="170"/>
        <end position="175"/>
    </location>
</feature>
<feature type="strand" evidence="9">
    <location>
        <begin position="177"/>
        <end position="186"/>
    </location>
</feature>
<feature type="strand" evidence="9">
    <location>
        <begin position="192"/>
        <end position="200"/>
    </location>
</feature>
<feature type="turn" evidence="9">
    <location>
        <begin position="201"/>
        <end position="204"/>
    </location>
</feature>
<feature type="helix" evidence="9">
    <location>
        <begin position="217"/>
        <end position="221"/>
    </location>
</feature>
<feature type="strand" evidence="9">
    <location>
        <begin position="229"/>
        <end position="235"/>
    </location>
</feature>
<feature type="strand" evidence="9">
    <location>
        <begin position="241"/>
        <end position="245"/>
    </location>
</feature>
<feature type="strand" evidence="9">
    <location>
        <begin position="251"/>
        <end position="256"/>
    </location>
</feature>
<feature type="strand" evidence="9">
    <location>
        <begin position="262"/>
        <end position="268"/>
    </location>
</feature>
<feature type="strand" evidence="9">
    <location>
        <begin position="275"/>
        <end position="283"/>
    </location>
</feature>
<feature type="strand" evidence="9">
    <location>
        <begin position="289"/>
        <end position="294"/>
    </location>
</feature>
<feature type="strand" evidence="9">
    <location>
        <begin position="299"/>
        <end position="304"/>
    </location>
</feature>
<feature type="turn" evidence="9">
    <location>
        <begin position="306"/>
        <end position="308"/>
    </location>
</feature>
<feature type="strand" evidence="9">
    <location>
        <begin position="311"/>
        <end position="318"/>
    </location>
</feature>
<feature type="strand" evidence="9">
    <location>
        <begin position="327"/>
        <end position="336"/>
    </location>
</feature>
<feature type="strand" evidence="9">
    <location>
        <begin position="342"/>
        <end position="347"/>
    </location>
</feature>
<feature type="strand" evidence="9">
    <location>
        <begin position="363"/>
        <end position="368"/>
    </location>
</feature>
<feature type="strand" evidence="9">
    <location>
        <begin position="374"/>
        <end position="381"/>
    </location>
</feature>
<feature type="strand" evidence="9">
    <location>
        <begin position="407"/>
        <end position="415"/>
    </location>
</feature>
<feature type="strand" evidence="9">
    <location>
        <begin position="421"/>
        <end position="427"/>
    </location>
</feature>
<feature type="turn" evidence="9">
    <location>
        <begin position="429"/>
        <end position="432"/>
    </location>
</feature>
<feature type="strand" evidence="9">
    <location>
        <begin position="435"/>
        <end position="441"/>
    </location>
</feature>
<feature type="strand" evidence="9">
    <location>
        <begin position="443"/>
        <end position="446"/>
    </location>
</feature>
<feature type="strand" evidence="9">
    <location>
        <begin position="448"/>
        <end position="450"/>
    </location>
</feature>
<feature type="turn" evidence="9">
    <location>
        <begin position="451"/>
        <end position="453"/>
    </location>
</feature>
<feature type="helix" evidence="9">
    <location>
        <begin position="457"/>
        <end position="459"/>
    </location>
</feature>
<feature type="helix" evidence="9">
    <location>
        <begin position="461"/>
        <end position="463"/>
    </location>
</feature>
<feature type="strand" evidence="9">
    <location>
        <begin position="470"/>
        <end position="476"/>
    </location>
</feature>
<feature type="strand" evidence="9">
    <location>
        <begin position="478"/>
        <end position="481"/>
    </location>
</feature>
<feature type="strand" evidence="9">
    <location>
        <begin position="487"/>
        <end position="493"/>
    </location>
</feature>
<feature type="turn" evidence="9">
    <location>
        <begin position="496"/>
        <end position="498"/>
    </location>
</feature>
<feature type="strand" evidence="9">
    <location>
        <begin position="501"/>
        <end position="507"/>
    </location>
</feature>
<feature type="strand" evidence="9">
    <location>
        <begin position="513"/>
        <end position="520"/>
    </location>
</feature>
<feature type="strand" evidence="9">
    <location>
        <begin position="527"/>
        <end position="534"/>
    </location>
</feature>
<feature type="strand" evidence="9">
    <location>
        <begin position="537"/>
        <end position="543"/>
    </location>
</feature>
<feature type="strand" evidence="9">
    <location>
        <begin position="550"/>
        <end position="557"/>
    </location>
</feature>
<feature type="strand" evidence="9">
    <location>
        <begin position="564"/>
        <end position="572"/>
    </location>
</feature>
<feature type="strand" evidence="9">
    <location>
        <begin position="580"/>
        <end position="587"/>
    </location>
</feature>
<feature type="strand" evidence="9">
    <location>
        <begin position="596"/>
        <end position="598"/>
    </location>
</feature>
<feature type="strand" evidence="9">
    <location>
        <begin position="604"/>
        <end position="610"/>
    </location>
</feature>
<feature type="strand" evidence="9">
    <location>
        <begin position="616"/>
        <end position="622"/>
    </location>
</feature>
<feature type="helix" evidence="9">
    <location>
        <begin position="625"/>
        <end position="629"/>
    </location>
</feature>
<feature type="helix" evidence="9">
    <location>
        <begin position="634"/>
        <end position="636"/>
    </location>
</feature>
<feature type="strand" evidence="9">
    <location>
        <begin position="648"/>
        <end position="652"/>
    </location>
</feature>
<feature type="turn" evidence="9">
    <location>
        <begin position="654"/>
        <end position="656"/>
    </location>
</feature>
<feature type="strand" evidence="9">
    <location>
        <begin position="657"/>
        <end position="661"/>
    </location>
</feature>
<feature type="helix" evidence="9">
    <location>
        <begin position="667"/>
        <end position="669"/>
    </location>
</feature>
<feature type="strand" evidence="9">
    <location>
        <begin position="673"/>
        <end position="675"/>
    </location>
</feature>
<feature type="helix" evidence="9">
    <location>
        <begin position="677"/>
        <end position="679"/>
    </location>
</feature>
<feature type="turn" evidence="9">
    <location>
        <begin position="681"/>
        <end position="683"/>
    </location>
</feature>
<reference key="1">
    <citation type="journal article" date="2011" name="J. Bacteriol.">
        <title>The main virulence determinant of Yersinia entomophaga MH96 is a broad-host-range toxin complex active against insects.</title>
        <authorList>
            <person name="Hurst M.R."/>
            <person name="Jones S.A."/>
            <person name="Binglin T."/>
            <person name="Harper L.A."/>
            <person name="Jackson T.A."/>
            <person name="Glare T.R."/>
        </authorList>
    </citation>
    <scope>NUCLEOTIDE SEQUENCE [GENOMIC DNA]</scope>
    <scope>IDENTIFICATION BY MASS SPECTROMETRY</scope>
    <scope>FUNCTION</scope>
    <scope>ACTIVITY REGULATION</scope>
    <scope>SUBUNIT</scope>
    <scope>SUBCELLULAR LOCATION</scope>
    <scope>DISRUPTION PHENOTYPE</scope>
    <source>
        <strain>ATCC BAA-1678 / DSM 22339 / MH96</strain>
    </source>
</reference>
<reference key="2">
    <citation type="journal article" date="2011" name="Proc. Natl. Acad. Sci. U.S.A.">
        <title>3D structure of the Yersinia entomophaga toxin complex and implications for insecticidal activity.</title>
        <authorList>
            <person name="Landsberg M.J."/>
            <person name="Jones S.A."/>
            <person name="Rothnagel R."/>
            <person name="Busby J.N."/>
            <person name="Marshall S.D."/>
            <person name="Simpson R.M."/>
            <person name="Lott J.S."/>
            <person name="Hankamer B."/>
            <person name="Hurst M.R."/>
        </authorList>
    </citation>
    <scope>FUNCTION</scope>
    <scope>SUBUNIT</scope>
    <source>
        <strain>ATCC BAA-1678 / DSM 22339 / MH96</strain>
    </source>
</reference>
<reference evidence="8" key="3">
    <citation type="journal article" date="2013" name="Nature">
        <title>The BC component of ABC toxins is an RHS-repeat-containing protein encapsulation device.</title>
        <authorList>
            <person name="Busby J.N."/>
            <person name="Panjikar S."/>
            <person name="Landsberg M.J."/>
            <person name="Hurst M.R."/>
            <person name="Lott J.S."/>
        </authorList>
    </citation>
    <scope>X-RAY CRYSTALLOGRAPHY (2.49 ANGSTROMS) OF 1-690 IN COMPLEX WITH YENB</scope>
    <scope>PROTEOLYTIC CLEAVAGE</scope>
    <scope>MUTAGENESIS OF ARG-650; ASP-663 AND ASP-686</scope>
    <source>
        <strain>ATCC BAA-1678 / DSM 22339 / MH96</strain>
    </source>
</reference>
<organism>
    <name type="scientific">Yersinia entomophaga</name>
    <dbReference type="NCBI Taxonomy" id="935293"/>
    <lineage>
        <taxon>Bacteria</taxon>
        <taxon>Pseudomonadati</taxon>
        <taxon>Pseudomonadota</taxon>
        <taxon>Gammaproteobacteria</taxon>
        <taxon>Enterobacterales</taxon>
        <taxon>Yersiniaceae</taxon>
        <taxon>Yersinia</taxon>
    </lineage>
</organism>
<name>YENC2_YERET</name>
<evidence type="ECO:0000269" key="1">
    <source>
    </source>
</evidence>
<evidence type="ECO:0000269" key="2">
    <source>
    </source>
</evidence>
<evidence type="ECO:0000269" key="3">
    <source>
    </source>
</evidence>
<evidence type="ECO:0000303" key="4">
    <source>
    </source>
</evidence>
<evidence type="ECO:0000305" key="5"/>
<evidence type="ECO:0000305" key="6">
    <source>
    </source>
</evidence>
<evidence type="ECO:0000305" key="7">
    <source>
    </source>
</evidence>
<evidence type="ECO:0007744" key="8">
    <source>
        <dbReference type="PDB" id="4IGL"/>
    </source>
</evidence>
<evidence type="ECO:0007829" key="9">
    <source>
        <dbReference type="PDB" id="4IGL"/>
    </source>
</evidence>
<protein>
    <recommendedName>
        <fullName evidence="4">Toxin subunit YenC2</fullName>
    </recommendedName>
</protein>